<sequence>MKYQQLENLESGWKWKYLVKKHREGELITRYIEASAAQEAVDELLSLENEPVLVNGWIDKHMNPELVNRMKQTIRARRKRHFNAEHQHTRKKSIDLEFIVWQRLAGLAQRRGKTLSETIVQLIEDAENKEKYANKMSSLKQDLQALLGKE</sequence>
<dbReference type="EMBL" id="CP000468">
    <property type="protein sequence ID" value="ABJ00365.1"/>
    <property type="molecule type" value="Genomic_DNA"/>
</dbReference>
<dbReference type="RefSeq" id="WP_000877153.1">
    <property type="nucleotide sequence ID" value="NZ_CADILS010000016.1"/>
</dbReference>
<dbReference type="SMR" id="A1A9M5"/>
<dbReference type="KEGG" id="ecv:APECO1_61"/>
<dbReference type="HOGENOM" id="CLU_142157_0_0_6"/>
<dbReference type="Proteomes" id="UP000008216">
    <property type="component" value="Chromosome"/>
</dbReference>
<dbReference type="GO" id="GO:0005737">
    <property type="term" value="C:cytoplasm"/>
    <property type="evidence" value="ECO:0007669"/>
    <property type="project" value="UniProtKB-SubCell"/>
</dbReference>
<dbReference type="GO" id="GO:0043565">
    <property type="term" value="F:sequence-specific DNA binding"/>
    <property type="evidence" value="ECO:0007669"/>
    <property type="project" value="UniProtKB-UniRule"/>
</dbReference>
<dbReference type="GO" id="GO:0051301">
    <property type="term" value="P:cell division"/>
    <property type="evidence" value="ECO:0007669"/>
    <property type="project" value="UniProtKB-UniRule"/>
</dbReference>
<dbReference type="GO" id="GO:0006355">
    <property type="term" value="P:regulation of DNA-templated transcription"/>
    <property type="evidence" value="ECO:0007669"/>
    <property type="project" value="InterPro"/>
</dbReference>
<dbReference type="FunFam" id="1.10.1220.10:FF:000004">
    <property type="entry name" value="Macrodomain Ter protein"/>
    <property type="match status" value="1"/>
</dbReference>
<dbReference type="FunFam" id="1.20.1270.380:FF:000001">
    <property type="entry name" value="Macrodomain Ter protein"/>
    <property type="match status" value="1"/>
</dbReference>
<dbReference type="Gene3D" id="1.20.1270.380">
    <property type="entry name" value="MatP, N-terminal domain"/>
    <property type="match status" value="1"/>
</dbReference>
<dbReference type="Gene3D" id="1.10.1220.10">
    <property type="entry name" value="Met repressor-like"/>
    <property type="match status" value="1"/>
</dbReference>
<dbReference type="HAMAP" id="MF_01073">
    <property type="entry name" value="MatP"/>
    <property type="match status" value="1"/>
</dbReference>
<dbReference type="InterPro" id="IPR013321">
    <property type="entry name" value="Arc_rbn_hlx_hlx"/>
</dbReference>
<dbReference type="InterPro" id="IPR009390">
    <property type="entry name" value="MatP"/>
</dbReference>
<dbReference type="InterPro" id="IPR035375">
    <property type="entry name" value="MatP_C"/>
</dbReference>
<dbReference type="InterPro" id="IPR035087">
    <property type="entry name" value="MatP_N"/>
</dbReference>
<dbReference type="InterPro" id="IPR038339">
    <property type="entry name" value="MatP_N_sf"/>
</dbReference>
<dbReference type="NCBIfam" id="NF003471">
    <property type="entry name" value="PRK05097.1"/>
    <property type="match status" value="1"/>
</dbReference>
<dbReference type="Pfam" id="PF06303">
    <property type="entry name" value="MatP"/>
    <property type="match status" value="1"/>
</dbReference>
<dbReference type="Pfam" id="PF17414">
    <property type="entry name" value="MatP_C"/>
    <property type="match status" value="1"/>
</dbReference>
<name>MATP_ECOK1</name>
<protein>
    <recommendedName>
        <fullName evidence="1">Macrodomain Ter protein</fullName>
    </recommendedName>
</protein>
<accession>A1A9M5</accession>
<proteinExistence type="inferred from homology"/>
<gene>
    <name evidence="1" type="primary">matP</name>
    <name type="ordered locus">Ecok1_08710</name>
    <name type="ORF">APECO1_61</name>
</gene>
<comment type="function">
    <text evidence="1">Required for spatial organization of the terminus region of the chromosome (Ter macrodomain) during the cell cycle. Prevents early segregation of duplicated Ter macrodomains during cell division. Binds specifically to matS, which is a 13 bp signature motif repeated within the Ter macrodomain.</text>
</comment>
<comment type="subunit">
    <text evidence="1">Homodimer.</text>
</comment>
<comment type="subcellular location">
    <subcellularLocation>
        <location evidence="1">Cytoplasm</location>
    </subcellularLocation>
</comment>
<comment type="similarity">
    <text evidence="1">Belongs to the MatP family.</text>
</comment>
<keyword id="KW-0131">Cell cycle</keyword>
<keyword id="KW-0132">Cell division</keyword>
<keyword id="KW-0963">Cytoplasm</keyword>
<keyword id="KW-0238">DNA-binding</keyword>
<keyword id="KW-1185">Reference proteome</keyword>
<evidence type="ECO:0000255" key="1">
    <source>
        <dbReference type="HAMAP-Rule" id="MF_01073"/>
    </source>
</evidence>
<organism>
    <name type="scientific">Escherichia coli O1:K1 / APEC</name>
    <dbReference type="NCBI Taxonomy" id="405955"/>
    <lineage>
        <taxon>Bacteria</taxon>
        <taxon>Pseudomonadati</taxon>
        <taxon>Pseudomonadota</taxon>
        <taxon>Gammaproteobacteria</taxon>
        <taxon>Enterobacterales</taxon>
        <taxon>Enterobacteriaceae</taxon>
        <taxon>Escherichia</taxon>
    </lineage>
</organism>
<feature type="chain" id="PRO_1000064625" description="Macrodomain Ter protein">
    <location>
        <begin position="1"/>
        <end position="150"/>
    </location>
</feature>
<reference key="1">
    <citation type="journal article" date="2007" name="J. Bacteriol.">
        <title>The genome sequence of avian pathogenic Escherichia coli strain O1:K1:H7 shares strong similarities with human extraintestinal pathogenic E. coli genomes.</title>
        <authorList>
            <person name="Johnson T.J."/>
            <person name="Kariyawasam S."/>
            <person name="Wannemuehler Y."/>
            <person name="Mangiamele P."/>
            <person name="Johnson S.J."/>
            <person name="Doetkott C."/>
            <person name="Skyberg J.A."/>
            <person name="Lynne A.M."/>
            <person name="Johnson J.R."/>
            <person name="Nolan L.K."/>
        </authorList>
    </citation>
    <scope>NUCLEOTIDE SEQUENCE [LARGE SCALE GENOMIC DNA]</scope>
</reference>